<organism>
    <name type="scientific">Rhodopseudomonas palustris (strain HaA2)</name>
    <dbReference type="NCBI Taxonomy" id="316058"/>
    <lineage>
        <taxon>Bacteria</taxon>
        <taxon>Pseudomonadati</taxon>
        <taxon>Pseudomonadota</taxon>
        <taxon>Alphaproteobacteria</taxon>
        <taxon>Hyphomicrobiales</taxon>
        <taxon>Nitrobacteraceae</taxon>
        <taxon>Rhodopseudomonas</taxon>
    </lineage>
</organism>
<protein>
    <recommendedName>
        <fullName evidence="1">Large ribosomal subunit protein uL18</fullName>
    </recommendedName>
    <alternativeName>
        <fullName evidence="2">50S ribosomal protein L18</fullName>
    </alternativeName>
</protein>
<proteinExistence type="inferred from homology"/>
<accession>Q2IXP4</accession>
<sequence length="120" mass="13072">MSKLNVTNARRKTRVRIALRRTANGRPRLSVFRSSKHIYAQVIDDLKGETLASASSLEKSMREAGNTGANIDAAKAVGKLLAERAVKQGVKEVVFDRGGYLYHGRVKALADAARESGLSF</sequence>
<gene>
    <name evidence="1" type="primary">rplR</name>
    <name type="ordered locus">RPB_2311</name>
</gene>
<keyword id="KW-1185">Reference proteome</keyword>
<keyword id="KW-0687">Ribonucleoprotein</keyword>
<keyword id="KW-0689">Ribosomal protein</keyword>
<keyword id="KW-0694">RNA-binding</keyword>
<keyword id="KW-0699">rRNA-binding</keyword>
<reference key="1">
    <citation type="submission" date="2006-01" db="EMBL/GenBank/DDBJ databases">
        <title>Complete sequence of Rhodopseudomonas palustris HaA2.</title>
        <authorList>
            <consortium name="US DOE Joint Genome Institute"/>
            <person name="Copeland A."/>
            <person name="Lucas S."/>
            <person name="Lapidus A."/>
            <person name="Barry K."/>
            <person name="Detter J.C."/>
            <person name="Glavina T."/>
            <person name="Hammon N."/>
            <person name="Israni S."/>
            <person name="Pitluck S."/>
            <person name="Chain P."/>
            <person name="Malfatti S."/>
            <person name="Shin M."/>
            <person name="Vergez L."/>
            <person name="Schmutz J."/>
            <person name="Larimer F."/>
            <person name="Land M."/>
            <person name="Hauser L."/>
            <person name="Pelletier D.A."/>
            <person name="Kyrpides N."/>
            <person name="Anderson I."/>
            <person name="Oda Y."/>
            <person name="Harwood C.S."/>
            <person name="Richardson P."/>
        </authorList>
    </citation>
    <scope>NUCLEOTIDE SEQUENCE [LARGE SCALE GENOMIC DNA]</scope>
    <source>
        <strain>HaA2</strain>
    </source>
</reference>
<comment type="function">
    <text evidence="1">This is one of the proteins that bind and probably mediate the attachment of the 5S RNA into the large ribosomal subunit, where it forms part of the central protuberance.</text>
</comment>
<comment type="subunit">
    <text evidence="1">Part of the 50S ribosomal subunit; part of the 5S rRNA/L5/L18/L25 subcomplex. Contacts the 5S and 23S rRNAs.</text>
</comment>
<comment type="similarity">
    <text evidence="1">Belongs to the universal ribosomal protein uL18 family.</text>
</comment>
<name>RL18_RHOP2</name>
<dbReference type="EMBL" id="CP000250">
    <property type="protein sequence ID" value="ABD07016.1"/>
    <property type="molecule type" value="Genomic_DNA"/>
</dbReference>
<dbReference type="RefSeq" id="WP_011441201.1">
    <property type="nucleotide sequence ID" value="NC_007778.1"/>
</dbReference>
<dbReference type="SMR" id="Q2IXP4"/>
<dbReference type="STRING" id="316058.RPB_2311"/>
<dbReference type="KEGG" id="rpb:RPB_2311"/>
<dbReference type="eggNOG" id="COG0256">
    <property type="taxonomic scope" value="Bacteria"/>
</dbReference>
<dbReference type="HOGENOM" id="CLU_098841_0_1_5"/>
<dbReference type="OrthoDB" id="9810939at2"/>
<dbReference type="Proteomes" id="UP000008809">
    <property type="component" value="Chromosome"/>
</dbReference>
<dbReference type="GO" id="GO:0022625">
    <property type="term" value="C:cytosolic large ribosomal subunit"/>
    <property type="evidence" value="ECO:0007669"/>
    <property type="project" value="TreeGrafter"/>
</dbReference>
<dbReference type="GO" id="GO:0008097">
    <property type="term" value="F:5S rRNA binding"/>
    <property type="evidence" value="ECO:0007669"/>
    <property type="project" value="TreeGrafter"/>
</dbReference>
<dbReference type="GO" id="GO:0003735">
    <property type="term" value="F:structural constituent of ribosome"/>
    <property type="evidence" value="ECO:0007669"/>
    <property type="project" value="InterPro"/>
</dbReference>
<dbReference type="GO" id="GO:0006412">
    <property type="term" value="P:translation"/>
    <property type="evidence" value="ECO:0007669"/>
    <property type="project" value="UniProtKB-UniRule"/>
</dbReference>
<dbReference type="CDD" id="cd00432">
    <property type="entry name" value="Ribosomal_L18_L5e"/>
    <property type="match status" value="1"/>
</dbReference>
<dbReference type="FunFam" id="3.30.420.100:FF:000001">
    <property type="entry name" value="50S ribosomal protein L18"/>
    <property type="match status" value="1"/>
</dbReference>
<dbReference type="Gene3D" id="3.30.420.100">
    <property type="match status" value="1"/>
</dbReference>
<dbReference type="HAMAP" id="MF_01337_B">
    <property type="entry name" value="Ribosomal_uL18_B"/>
    <property type="match status" value="1"/>
</dbReference>
<dbReference type="InterPro" id="IPR004389">
    <property type="entry name" value="Ribosomal_uL18_bac-type"/>
</dbReference>
<dbReference type="InterPro" id="IPR005484">
    <property type="entry name" value="Ribosomal_uL18_bac/euk"/>
</dbReference>
<dbReference type="NCBIfam" id="TIGR00060">
    <property type="entry name" value="L18_bact"/>
    <property type="match status" value="1"/>
</dbReference>
<dbReference type="PANTHER" id="PTHR12899">
    <property type="entry name" value="39S RIBOSOMAL PROTEIN L18, MITOCHONDRIAL"/>
    <property type="match status" value="1"/>
</dbReference>
<dbReference type="PANTHER" id="PTHR12899:SF3">
    <property type="entry name" value="LARGE RIBOSOMAL SUBUNIT PROTEIN UL18M"/>
    <property type="match status" value="1"/>
</dbReference>
<dbReference type="Pfam" id="PF00861">
    <property type="entry name" value="Ribosomal_L18p"/>
    <property type="match status" value="1"/>
</dbReference>
<dbReference type="SUPFAM" id="SSF53137">
    <property type="entry name" value="Translational machinery components"/>
    <property type="match status" value="1"/>
</dbReference>
<feature type="chain" id="PRO_0000251360" description="Large ribosomal subunit protein uL18">
    <location>
        <begin position="1"/>
        <end position="120"/>
    </location>
</feature>
<evidence type="ECO:0000255" key="1">
    <source>
        <dbReference type="HAMAP-Rule" id="MF_01337"/>
    </source>
</evidence>
<evidence type="ECO:0000305" key="2"/>